<accession>A9W6R7</accession>
<proteinExistence type="inferred from homology"/>
<evidence type="ECO:0000255" key="1">
    <source>
        <dbReference type="HAMAP-Rule" id="MF_00332"/>
    </source>
</evidence>
<evidence type="ECO:0000256" key="2">
    <source>
        <dbReference type="SAM" id="MobiDB-lite"/>
    </source>
</evidence>
<gene>
    <name evidence="1" type="primary">dnaK</name>
    <name type="ordered locus">Mext_2960</name>
</gene>
<keyword id="KW-0067">ATP-binding</keyword>
<keyword id="KW-0143">Chaperone</keyword>
<keyword id="KW-0547">Nucleotide-binding</keyword>
<keyword id="KW-0597">Phosphoprotein</keyword>
<keyword id="KW-0346">Stress response</keyword>
<protein>
    <recommendedName>
        <fullName evidence="1">Chaperone protein DnaK</fullName>
    </recommendedName>
    <alternativeName>
        <fullName evidence="1">HSP70</fullName>
    </alternativeName>
    <alternativeName>
        <fullName evidence="1">Heat shock 70 kDa protein</fullName>
    </alternativeName>
    <alternativeName>
        <fullName evidence="1">Heat shock protein 70</fullName>
    </alternativeName>
</protein>
<dbReference type="EMBL" id="CP000908">
    <property type="protein sequence ID" value="ABY31349.1"/>
    <property type="molecule type" value="Genomic_DNA"/>
</dbReference>
<dbReference type="RefSeq" id="WP_003603957.1">
    <property type="nucleotide sequence ID" value="NC_010172.1"/>
</dbReference>
<dbReference type="SMR" id="A9W6R7"/>
<dbReference type="KEGG" id="mex:Mext_2960"/>
<dbReference type="eggNOG" id="COG0443">
    <property type="taxonomic scope" value="Bacteria"/>
</dbReference>
<dbReference type="HOGENOM" id="CLU_005965_2_1_5"/>
<dbReference type="BioCyc" id="MEXT419610:MEXT_RS14905-MONOMER"/>
<dbReference type="GO" id="GO:0005524">
    <property type="term" value="F:ATP binding"/>
    <property type="evidence" value="ECO:0007669"/>
    <property type="project" value="UniProtKB-UniRule"/>
</dbReference>
<dbReference type="GO" id="GO:0140662">
    <property type="term" value="F:ATP-dependent protein folding chaperone"/>
    <property type="evidence" value="ECO:0007669"/>
    <property type="project" value="InterPro"/>
</dbReference>
<dbReference type="GO" id="GO:0051082">
    <property type="term" value="F:unfolded protein binding"/>
    <property type="evidence" value="ECO:0007669"/>
    <property type="project" value="InterPro"/>
</dbReference>
<dbReference type="CDD" id="cd11733">
    <property type="entry name" value="ASKHA_NBD_HSP70_HSPA9"/>
    <property type="match status" value="1"/>
</dbReference>
<dbReference type="FunFam" id="2.60.34.10:FF:000014">
    <property type="entry name" value="Chaperone protein DnaK HSP70"/>
    <property type="match status" value="1"/>
</dbReference>
<dbReference type="FunFam" id="3.30.420.40:FF:000020">
    <property type="entry name" value="Chaperone protein HscA homolog"/>
    <property type="match status" value="1"/>
</dbReference>
<dbReference type="FunFam" id="1.20.1270.10:FF:000001">
    <property type="entry name" value="Molecular chaperone DnaK"/>
    <property type="match status" value="1"/>
</dbReference>
<dbReference type="FunFam" id="3.30.420.40:FF:000004">
    <property type="entry name" value="Molecular chaperone DnaK"/>
    <property type="match status" value="1"/>
</dbReference>
<dbReference type="FunFam" id="3.90.640.10:FF:000003">
    <property type="entry name" value="Molecular chaperone DnaK"/>
    <property type="match status" value="1"/>
</dbReference>
<dbReference type="Gene3D" id="1.20.1270.10">
    <property type="match status" value="1"/>
</dbReference>
<dbReference type="Gene3D" id="3.30.420.40">
    <property type="match status" value="2"/>
</dbReference>
<dbReference type="Gene3D" id="3.90.640.10">
    <property type="entry name" value="Actin, Chain A, domain 4"/>
    <property type="match status" value="1"/>
</dbReference>
<dbReference type="Gene3D" id="2.60.34.10">
    <property type="entry name" value="Substrate Binding Domain Of DNAk, Chain A, domain 1"/>
    <property type="match status" value="1"/>
</dbReference>
<dbReference type="HAMAP" id="MF_00332">
    <property type="entry name" value="DnaK"/>
    <property type="match status" value="1"/>
</dbReference>
<dbReference type="InterPro" id="IPR043129">
    <property type="entry name" value="ATPase_NBD"/>
</dbReference>
<dbReference type="InterPro" id="IPR012725">
    <property type="entry name" value="Chaperone_DnaK"/>
</dbReference>
<dbReference type="InterPro" id="IPR018181">
    <property type="entry name" value="Heat_shock_70_CS"/>
</dbReference>
<dbReference type="InterPro" id="IPR029048">
    <property type="entry name" value="HSP70_C_sf"/>
</dbReference>
<dbReference type="InterPro" id="IPR029047">
    <property type="entry name" value="HSP70_peptide-bd_sf"/>
</dbReference>
<dbReference type="InterPro" id="IPR013126">
    <property type="entry name" value="Hsp_70_fam"/>
</dbReference>
<dbReference type="NCBIfam" id="NF001413">
    <property type="entry name" value="PRK00290.1"/>
    <property type="match status" value="1"/>
</dbReference>
<dbReference type="NCBIfam" id="NF003520">
    <property type="entry name" value="PRK05183.1"/>
    <property type="match status" value="1"/>
</dbReference>
<dbReference type="NCBIfam" id="TIGR02350">
    <property type="entry name" value="prok_dnaK"/>
    <property type="match status" value="1"/>
</dbReference>
<dbReference type="PANTHER" id="PTHR19375">
    <property type="entry name" value="HEAT SHOCK PROTEIN 70KDA"/>
    <property type="match status" value="1"/>
</dbReference>
<dbReference type="Pfam" id="PF00012">
    <property type="entry name" value="HSP70"/>
    <property type="match status" value="1"/>
</dbReference>
<dbReference type="PRINTS" id="PR00301">
    <property type="entry name" value="HEATSHOCK70"/>
</dbReference>
<dbReference type="SUPFAM" id="SSF53067">
    <property type="entry name" value="Actin-like ATPase domain"/>
    <property type="match status" value="2"/>
</dbReference>
<dbReference type="SUPFAM" id="SSF100934">
    <property type="entry name" value="Heat shock protein 70kD (HSP70), C-terminal subdomain"/>
    <property type="match status" value="1"/>
</dbReference>
<dbReference type="SUPFAM" id="SSF100920">
    <property type="entry name" value="Heat shock protein 70kD (HSP70), peptide-binding domain"/>
    <property type="match status" value="1"/>
</dbReference>
<dbReference type="PROSITE" id="PS00297">
    <property type="entry name" value="HSP70_1"/>
    <property type="match status" value="1"/>
</dbReference>
<dbReference type="PROSITE" id="PS00329">
    <property type="entry name" value="HSP70_2"/>
    <property type="match status" value="1"/>
</dbReference>
<dbReference type="PROSITE" id="PS01036">
    <property type="entry name" value="HSP70_3"/>
    <property type="match status" value="1"/>
</dbReference>
<name>DNAK_METEP</name>
<reference key="1">
    <citation type="submission" date="2007-12" db="EMBL/GenBank/DDBJ databases">
        <title>Complete sequence of Methylobacterium extorquens PA1.</title>
        <authorList>
            <consortium name="US DOE Joint Genome Institute"/>
            <person name="Copeland A."/>
            <person name="Lucas S."/>
            <person name="Lapidus A."/>
            <person name="Barry K."/>
            <person name="Glavina del Rio T."/>
            <person name="Dalin E."/>
            <person name="Tice H."/>
            <person name="Pitluck S."/>
            <person name="Saunders E."/>
            <person name="Brettin T."/>
            <person name="Bruce D."/>
            <person name="Detter J.C."/>
            <person name="Han C."/>
            <person name="Schmutz J."/>
            <person name="Larimer F."/>
            <person name="Land M."/>
            <person name="Hauser L."/>
            <person name="Kyrpides N."/>
            <person name="Kim E."/>
            <person name="Marx C."/>
            <person name="Richardson P."/>
        </authorList>
    </citation>
    <scope>NUCLEOTIDE SEQUENCE [LARGE SCALE GENOMIC DNA]</scope>
    <source>
        <strain>PA1</strain>
    </source>
</reference>
<comment type="function">
    <text evidence="1">Acts as a chaperone.</text>
</comment>
<comment type="induction">
    <text evidence="1">By stress conditions e.g. heat shock.</text>
</comment>
<comment type="similarity">
    <text evidence="1">Belongs to the heat shock protein 70 family.</text>
</comment>
<sequence>MGKVIGIDLGTTNSCVAVMEGTQPRVIENAEGARTTPSIVAFTDDGERLVGQPAKRQAVTNPERTFFAIKRLIGRTYDDPLTQKDKGLVPYKIARGDNGDAWVEADGKKYSPSQISAFTLQKMKETAESHLGQPVTQAVITVPAYFNDAQRQATKDAGKIAGLEVLRIINEPTAAALAYGLDKKKAGTIAVYDLGGGTFDVSILEIGDGVFEVKSTNGDTFLGGEDFDNRVVEYLTAEFKKEQGIDLTKDKLALQRLKEAAEKAKIELSSATQTEINLPYITADASGPKHLALKLSRAKFESLVDDLVQRTIEPCRKALKDAGVSASEIDEVVLVGGQTRMPKVQEVVKAFFGKEPHKGVNPDEVVAIGAAVQAGVLQGDVKDVLLLDVTPLSLGIETLGGVFTRLIDRNTTIPTKKSQVFSTAEDNQNAVTIRVFQGEREMAADNKLLGQFDLVGIPPAPRGMPQIEVTFDIDANGIVNVTAKDKATNKEHQIRIQASGGLSDADIEKMVKDAEANAEADKKRRELVEVKNQGESLIHATEKSVSEYGDKVSAADKGAIESAITALRSALEGEDAEGIKAKTNDLMQASMKLGEAMYAASQTEGAPGADGAASTDEKKDDVIDADFQEVDENERKKRA</sequence>
<feature type="chain" id="PRO_1000119727" description="Chaperone protein DnaK">
    <location>
        <begin position="1"/>
        <end position="639"/>
    </location>
</feature>
<feature type="region of interest" description="Disordered" evidence="2">
    <location>
        <begin position="598"/>
        <end position="639"/>
    </location>
</feature>
<feature type="compositionally biased region" description="Acidic residues" evidence="2">
    <location>
        <begin position="623"/>
        <end position="632"/>
    </location>
</feature>
<feature type="modified residue" description="Phosphothreonine; by autocatalysis" evidence="1">
    <location>
        <position position="198"/>
    </location>
</feature>
<organism>
    <name type="scientific">Methylorubrum extorquens (strain PA1)</name>
    <name type="common">Methylobacterium extorquens</name>
    <dbReference type="NCBI Taxonomy" id="419610"/>
    <lineage>
        <taxon>Bacteria</taxon>
        <taxon>Pseudomonadati</taxon>
        <taxon>Pseudomonadota</taxon>
        <taxon>Alphaproteobacteria</taxon>
        <taxon>Hyphomicrobiales</taxon>
        <taxon>Methylobacteriaceae</taxon>
        <taxon>Methylorubrum</taxon>
    </lineage>
</organism>